<organism>
    <name type="scientific">Listeria monocytogenes serotype 4b (strain F2365)</name>
    <dbReference type="NCBI Taxonomy" id="265669"/>
    <lineage>
        <taxon>Bacteria</taxon>
        <taxon>Bacillati</taxon>
        <taxon>Bacillota</taxon>
        <taxon>Bacilli</taxon>
        <taxon>Bacillales</taxon>
        <taxon>Listeriaceae</taxon>
        <taxon>Listeria</taxon>
    </lineage>
</organism>
<reference key="1">
    <citation type="journal article" date="2004" name="Nucleic Acids Res.">
        <title>Whole genome comparisons of serotype 4b and 1/2a strains of the food-borne pathogen Listeria monocytogenes reveal new insights into the core genome components of this species.</title>
        <authorList>
            <person name="Nelson K.E."/>
            <person name="Fouts D.E."/>
            <person name="Mongodin E.F."/>
            <person name="Ravel J."/>
            <person name="DeBoy R.T."/>
            <person name="Kolonay J.F."/>
            <person name="Rasko D.A."/>
            <person name="Angiuoli S.V."/>
            <person name="Gill S.R."/>
            <person name="Paulsen I.T."/>
            <person name="Peterson J.D."/>
            <person name="White O."/>
            <person name="Nelson W.C."/>
            <person name="Nierman W.C."/>
            <person name="Beanan M.J."/>
            <person name="Brinkac L.M."/>
            <person name="Daugherty S.C."/>
            <person name="Dodson R.J."/>
            <person name="Durkin A.S."/>
            <person name="Madupu R."/>
            <person name="Haft D.H."/>
            <person name="Selengut J."/>
            <person name="Van Aken S.E."/>
            <person name="Khouri H.M."/>
            <person name="Fedorova N."/>
            <person name="Forberger H.A."/>
            <person name="Tran B."/>
            <person name="Kathariou S."/>
            <person name="Wonderling L.D."/>
            <person name="Uhlich G.A."/>
            <person name="Bayles D.O."/>
            <person name="Luchansky J.B."/>
            <person name="Fraser C.M."/>
        </authorList>
    </citation>
    <scope>NUCLEOTIDE SEQUENCE [LARGE SCALE GENOMIC DNA]</scope>
    <source>
        <strain>F2365</strain>
    </source>
</reference>
<name>PROA_LISMF</name>
<comment type="function">
    <text evidence="1">Catalyzes the NADPH-dependent reduction of L-glutamate 5-phosphate into L-glutamate 5-semialdehyde and phosphate. The product spontaneously undergoes cyclization to form 1-pyrroline-5-carboxylate.</text>
</comment>
<comment type="catalytic activity">
    <reaction evidence="1">
        <text>L-glutamate 5-semialdehyde + phosphate + NADP(+) = L-glutamyl 5-phosphate + NADPH + H(+)</text>
        <dbReference type="Rhea" id="RHEA:19541"/>
        <dbReference type="ChEBI" id="CHEBI:15378"/>
        <dbReference type="ChEBI" id="CHEBI:43474"/>
        <dbReference type="ChEBI" id="CHEBI:57783"/>
        <dbReference type="ChEBI" id="CHEBI:58066"/>
        <dbReference type="ChEBI" id="CHEBI:58274"/>
        <dbReference type="ChEBI" id="CHEBI:58349"/>
        <dbReference type="EC" id="1.2.1.41"/>
    </reaction>
</comment>
<comment type="pathway">
    <text evidence="1">Amino-acid biosynthesis; L-proline biosynthesis; L-glutamate 5-semialdehyde from L-glutamate: step 2/2.</text>
</comment>
<comment type="subcellular location">
    <subcellularLocation>
        <location evidence="1">Cytoplasm</location>
    </subcellularLocation>
</comment>
<comment type="similarity">
    <text evidence="1">Belongs to the gamma-glutamyl phosphate reductase family.</text>
</comment>
<evidence type="ECO:0000255" key="1">
    <source>
        <dbReference type="HAMAP-Rule" id="MF_00412"/>
    </source>
</evidence>
<protein>
    <recommendedName>
        <fullName evidence="1">Gamma-glutamyl phosphate reductase</fullName>
        <shortName evidence="1">GPR</shortName>
        <ecNumber evidence="1">1.2.1.41</ecNumber>
    </recommendedName>
    <alternativeName>
        <fullName evidence="1">Glutamate-5-semialdehyde dehydrogenase</fullName>
    </alternativeName>
    <alternativeName>
        <fullName evidence="1">Glutamyl-gamma-semialdehyde dehydrogenase</fullName>
        <shortName evidence="1">GSA dehydrogenase</shortName>
    </alternativeName>
</protein>
<feature type="chain" id="PRO_0000189745" description="Gamma-glutamyl phosphate reductase">
    <location>
        <begin position="1"/>
        <end position="415"/>
    </location>
</feature>
<keyword id="KW-0028">Amino-acid biosynthesis</keyword>
<keyword id="KW-0963">Cytoplasm</keyword>
<keyword id="KW-0521">NADP</keyword>
<keyword id="KW-0560">Oxidoreductase</keyword>
<keyword id="KW-0641">Proline biosynthesis</keyword>
<dbReference type="EC" id="1.2.1.41" evidence="1"/>
<dbReference type="EMBL" id="AE017262">
    <property type="protein sequence ID" value="AAT04051.1"/>
    <property type="molecule type" value="Genomic_DNA"/>
</dbReference>
<dbReference type="RefSeq" id="WP_010958878.1">
    <property type="nucleotide sequence ID" value="NC_002973.6"/>
</dbReference>
<dbReference type="SMR" id="Q720G3"/>
<dbReference type="KEGG" id="lmf:LMOf2365_1276"/>
<dbReference type="HOGENOM" id="CLU_030231_0_0_9"/>
<dbReference type="UniPathway" id="UPA00098">
    <property type="reaction ID" value="UER00360"/>
</dbReference>
<dbReference type="GO" id="GO:0005737">
    <property type="term" value="C:cytoplasm"/>
    <property type="evidence" value="ECO:0007669"/>
    <property type="project" value="UniProtKB-SubCell"/>
</dbReference>
<dbReference type="GO" id="GO:0004350">
    <property type="term" value="F:glutamate-5-semialdehyde dehydrogenase activity"/>
    <property type="evidence" value="ECO:0007669"/>
    <property type="project" value="UniProtKB-UniRule"/>
</dbReference>
<dbReference type="GO" id="GO:0050661">
    <property type="term" value="F:NADP binding"/>
    <property type="evidence" value="ECO:0007669"/>
    <property type="project" value="InterPro"/>
</dbReference>
<dbReference type="GO" id="GO:0055129">
    <property type="term" value="P:L-proline biosynthetic process"/>
    <property type="evidence" value="ECO:0007669"/>
    <property type="project" value="UniProtKB-UniRule"/>
</dbReference>
<dbReference type="CDD" id="cd07079">
    <property type="entry name" value="ALDH_F18-19_ProA-GPR"/>
    <property type="match status" value="1"/>
</dbReference>
<dbReference type="FunFam" id="3.40.309.10:FF:000006">
    <property type="entry name" value="Gamma-glutamyl phosphate reductase"/>
    <property type="match status" value="1"/>
</dbReference>
<dbReference type="Gene3D" id="3.40.605.10">
    <property type="entry name" value="Aldehyde Dehydrogenase, Chain A, domain 1"/>
    <property type="match status" value="1"/>
</dbReference>
<dbReference type="Gene3D" id="3.40.309.10">
    <property type="entry name" value="Aldehyde Dehydrogenase, Chain A, domain 2"/>
    <property type="match status" value="1"/>
</dbReference>
<dbReference type="HAMAP" id="MF_00412">
    <property type="entry name" value="ProA"/>
    <property type="match status" value="1"/>
</dbReference>
<dbReference type="InterPro" id="IPR016161">
    <property type="entry name" value="Ald_DH/histidinol_DH"/>
</dbReference>
<dbReference type="InterPro" id="IPR016163">
    <property type="entry name" value="Ald_DH_C"/>
</dbReference>
<dbReference type="InterPro" id="IPR016162">
    <property type="entry name" value="Ald_DH_N"/>
</dbReference>
<dbReference type="InterPro" id="IPR015590">
    <property type="entry name" value="Aldehyde_DH_dom"/>
</dbReference>
<dbReference type="InterPro" id="IPR020593">
    <property type="entry name" value="G-glutamylP_reductase_CS"/>
</dbReference>
<dbReference type="InterPro" id="IPR012134">
    <property type="entry name" value="Glu-5-SA_DH"/>
</dbReference>
<dbReference type="InterPro" id="IPR000965">
    <property type="entry name" value="GPR_dom"/>
</dbReference>
<dbReference type="NCBIfam" id="NF001221">
    <property type="entry name" value="PRK00197.1"/>
    <property type="match status" value="1"/>
</dbReference>
<dbReference type="NCBIfam" id="TIGR00407">
    <property type="entry name" value="proA"/>
    <property type="match status" value="1"/>
</dbReference>
<dbReference type="PANTHER" id="PTHR11063:SF8">
    <property type="entry name" value="DELTA-1-PYRROLINE-5-CARBOXYLATE SYNTHASE"/>
    <property type="match status" value="1"/>
</dbReference>
<dbReference type="PANTHER" id="PTHR11063">
    <property type="entry name" value="GLUTAMATE SEMIALDEHYDE DEHYDROGENASE"/>
    <property type="match status" value="1"/>
</dbReference>
<dbReference type="Pfam" id="PF00171">
    <property type="entry name" value="Aldedh"/>
    <property type="match status" value="1"/>
</dbReference>
<dbReference type="PIRSF" id="PIRSF000151">
    <property type="entry name" value="GPR"/>
    <property type="match status" value="1"/>
</dbReference>
<dbReference type="SUPFAM" id="SSF53720">
    <property type="entry name" value="ALDH-like"/>
    <property type="match status" value="1"/>
</dbReference>
<dbReference type="PROSITE" id="PS01223">
    <property type="entry name" value="PROA"/>
    <property type="match status" value="1"/>
</dbReference>
<gene>
    <name evidence="1" type="primary">proA</name>
    <name type="ordered locus">LMOf2365_1276</name>
</gene>
<proteinExistence type="inferred from homology"/>
<accession>Q720G3</accession>
<sequence length="415" mass="45493">MTELIKKGSGAKEASQFLAQATTKHKNAALLNLSNDLLIHTATLLQENEKDILRAQQKGTPETMIDRLRLTEERIKEISEAVKQVVALKDPIGEVTNMWKNEAELTIGKTRVPLGVIGIIYESRPNVTVDASVLCFKTGNAVILRGGSDAIDSNKALMSVIQDSLEASGFPRSSVQLIEDTSRETARDMMRLNRFLDVLIPRGGARLIQTVLENATVPVIETGTGNCHIYVDKAAEKQMAIDILVNAKCSRPSVCNAAETLLIHRDVAEDYLPAMETALKEYDVELRADERAKGILQEAKAATESDWEDEFLDFILAIKVVDSAEEAIDHINKYGTKHSEAIISNDYATGQAFHQKVDAAAVYINASTRFTDGFAMGFGAEIGISTQKLHARGPMGLTELTSTKYIIFGDGQIRN</sequence>